<organism>
    <name type="scientific">Shigella boydii serotype 18 (strain CDC 3083-94 / BS512)</name>
    <dbReference type="NCBI Taxonomy" id="344609"/>
    <lineage>
        <taxon>Bacteria</taxon>
        <taxon>Pseudomonadati</taxon>
        <taxon>Pseudomonadota</taxon>
        <taxon>Gammaproteobacteria</taxon>
        <taxon>Enterobacterales</taxon>
        <taxon>Enterobacteriaceae</taxon>
        <taxon>Shigella</taxon>
    </lineage>
</organism>
<reference key="1">
    <citation type="submission" date="2008-05" db="EMBL/GenBank/DDBJ databases">
        <title>Complete sequence of Shigella boydii serotype 18 strain BS512.</title>
        <authorList>
            <person name="Rasko D.A."/>
            <person name="Rosovitz M."/>
            <person name="Maurelli A.T."/>
            <person name="Myers G."/>
            <person name="Seshadri R."/>
            <person name="Cer R."/>
            <person name="Jiang L."/>
            <person name="Ravel J."/>
            <person name="Sebastian Y."/>
        </authorList>
    </citation>
    <scope>NUCLEOTIDE SEQUENCE [LARGE SCALE GENOMIC DNA]</scope>
    <source>
        <strain>CDC 3083-94 / BS512</strain>
    </source>
</reference>
<protein>
    <recommendedName>
        <fullName evidence="1">Large ribosomal subunit protein bL12</fullName>
    </recommendedName>
    <alternativeName>
        <fullName evidence="2">50S ribosomal protein L7/L12</fullName>
    </alternativeName>
</protein>
<keyword id="KW-1185">Reference proteome</keyword>
<keyword id="KW-0687">Ribonucleoprotein</keyword>
<keyword id="KW-0689">Ribosomal protein</keyword>
<evidence type="ECO:0000255" key="1">
    <source>
        <dbReference type="HAMAP-Rule" id="MF_00368"/>
    </source>
</evidence>
<evidence type="ECO:0000305" key="2"/>
<proteinExistence type="inferred from homology"/>
<sequence>MSITKDQIIEAVAAMSVMDVVELISAMEEKFGVSAAAAVAVAAGPVEAAEEKTEFDVILKAAGANKVAVIKAVRGATGLGLKEAKDLVESAPAALKEGVSKDDAEALKKALEEAGAEVEVK</sequence>
<accession>B2TWH2</accession>
<name>RL7_SHIB3</name>
<gene>
    <name evidence="1" type="primary">rplL</name>
    <name type="ordered locus">SbBS512_E4474</name>
</gene>
<dbReference type="EMBL" id="CP001063">
    <property type="protein sequence ID" value="ACD08673.1"/>
    <property type="molecule type" value="Genomic_DNA"/>
</dbReference>
<dbReference type="RefSeq" id="WP_000028878.1">
    <property type="nucleotide sequence ID" value="NC_010658.1"/>
</dbReference>
<dbReference type="SMR" id="B2TWH2"/>
<dbReference type="STRING" id="344609.SbBS512_E4474"/>
<dbReference type="GeneID" id="86944525"/>
<dbReference type="KEGG" id="sbc:SbBS512_E4474"/>
<dbReference type="HOGENOM" id="CLU_086499_3_2_6"/>
<dbReference type="Proteomes" id="UP000001030">
    <property type="component" value="Chromosome"/>
</dbReference>
<dbReference type="GO" id="GO:0022625">
    <property type="term" value="C:cytosolic large ribosomal subunit"/>
    <property type="evidence" value="ECO:0007669"/>
    <property type="project" value="TreeGrafter"/>
</dbReference>
<dbReference type="GO" id="GO:0003729">
    <property type="term" value="F:mRNA binding"/>
    <property type="evidence" value="ECO:0007669"/>
    <property type="project" value="TreeGrafter"/>
</dbReference>
<dbReference type="GO" id="GO:0003735">
    <property type="term" value="F:structural constituent of ribosome"/>
    <property type="evidence" value="ECO:0007669"/>
    <property type="project" value="InterPro"/>
</dbReference>
<dbReference type="GO" id="GO:0006412">
    <property type="term" value="P:translation"/>
    <property type="evidence" value="ECO:0007669"/>
    <property type="project" value="UniProtKB-UniRule"/>
</dbReference>
<dbReference type="CDD" id="cd00387">
    <property type="entry name" value="Ribosomal_L7_L12"/>
    <property type="match status" value="1"/>
</dbReference>
<dbReference type="FunFam" id="1.20.5.710:FF:000001">
    <property type="entry name" value="50S ribosomal protein L7/L12"/>
    <property type="match status" value="1"/>
</dbReference>
<dbReference type="FunFam" id="3.30.1390.10:FF:000001">
    <property type="entry name" value="50S ribosomal protein L7/L12"/>
    <property type="match status" value="1"/>
</dbReference>
<dbReference type="Gene3D" id="3.30.1390.10">
    <property type="match status" value="1"/>
</dbReference>
<dbReference type="Gene3D" id="1.20.5.710">
    <property type="entry name" value="Single helix bin"/>
    <property type="match status" value="1"/>
</dbReference>
<dbReference type="HAMAP" id="MF_00368">
    <property type="entry name" value="Ribosomal_bL12"/>
    <property type="match status" value="1"/>
</dbReference>
<dbReference type="InterPro" id="IPR000206">
    <property type="entry name" value="Ribosomal_bL12"/>
</dbReference>
<dbReference type="InterPro" id="IPR013823">
    <property type="entry name" value="Ribosomal_bL12_C"/>
</dbReference>
<dbReference type="InterPro" id="IPR014719">
    <property type="entry name" value="Ribosomal_bL12_C/ClpS-like"/>
</dbReference>
<dbReference type="InterPro" id="IPR008932">
    <property type="entry name" value="Ribosomal_bL12_oligo"/>
</dbReference>
<dbReference type="InterPro" id="IPR036235">
    <property type="entry name" value="Ribosomal_bL12_oligo_N_sf"/>
</dbReference>
<dbReference type="NCBIfam" id="TIGR00855">
    <property type="entry name" value="L12"/>
    <property type="match status" value="1"/>
</dbReference>
<dbReference type="PANTHER" id="PTHR45987">
    <property type="entry name" value="39S RIBOSOMAL PROTEIN L12"/>
    <property type="match status" value="1"/>
</dbReference>
<dbReference type="PANTHER" id="PTHR45987:SF4">
    <property type="entry name" value="LARGE RIBOSOMAL SUBUNIT PROTEIN BL12M"/>
    <property type="match status" value="1"/>
</dbReference>
<dbReference type="Pfam" id="PF00542">
    <property type="entry name" value="Ribosomal_L12"/>
    <property type="match status" value="1"/>
</dbReference>
<dbReference type="Pfam" id="PF16320">
    <property type="entry name" value="Ribosomal_L12_N"/>
    <property type="match status" value="1"/>
</dbReference>
<dbReference type="SUPFAM" id="SSF54736">
    <property type="entry name" value="ClpS-like"/>
    <property type="match status" value="1"/>
</dbReference>
<dbReference type="SUPFAM" id="SSF48300">
    <property type="entry name" value="Ribosomal protein L7/12, oligomerisation (N-terminal) domain"/>
    <property type="match status" value="1"/>
</dbReference>
<comment type="function">
    <text evidence="1">Forms part of the ribosomal stalk which helps the ribosome interact with GTP-bound translation factors. Is thus essential for accurate translation.</text>
</comment>
<comment type="subunit">
    <text evidence="1">Homodimer. Part of the ribosomal stalk of the 50S ribosomal subunit. Forms a multimeric L10(L12)X complex, where L10 forms an elongated spine to which 2 to 4 L12 dimers bind in a sequential fashion. Binds GTP-bound translation factors.</text>
</comment>
<comment type="similarity">
    <text evidence="1">Belongs to the bacterial ribosomal protein bL12 family.</text>
</comment>
<feature type="chain" id="PRO_1000121491" description="Large ribosomal subunit protein bL12">
    <location>
        <begin position="1"/>
        <end position="121"/>
    </location>
</feature>